<organism>
    <name type="scientific">Cronobacter sakazakii (strain ATCC BAA-894)</name>
    <name type="common">Enterobacter sakazakii</name>
    <dbReference type="NCBI Taxonomy" id="290339"/>
    <lineage>
        <taxon>Bacteria</taxon>
        <taxon>Pseudomonadati</taxon>
        <taxon>Pseudomonadota</taxon>
        <taxon>Gammaproteobacteria</taxon>
        <taxon>Enterobacterales</taxon>
        <taxon>Enterobacteriaceae</taxon>
        <taxon>Cronobacter</taxon>
    </lineage>
</organism>
<feature type="chain" id="PRO_1000001170" description="Ribosome maturation factor RimM">
    <location>
        <begin position="1"/>
        <end position="183"/>
    </location>
</feature>
<feature type="domain" description="PRC barrel" evidence="1">
    <location>
        <begin position="104"/>
        <end position="183"/>
    </location>
</feature>
<evidence type="ECO:0000255" key="1">
    <source>
        <dbReference type="HAMAP-Rule" id="MF_00014"/>
    </source>
</evidence>
<proteinExistence type="inferred from homology"/>
<name>RIMM_CROS8</name>
<keyword id="KW-0143">Chaperone</keyword>
<keyword id="KW-0963">Cytoplasm</keyword>
<keyword id="KW-1185">Reference proteome</keyword>
<keyword id="KW-0690">Ribosome biogenesis</keyword>
<keyword id="KW-0698">rRNA processing</keyword>
<sequence length="183" mass="20618">MMSKQDAAKAPVNPIVLGKMGSSYGIRGWLRVFSSTEDAESIFDYQPWFIQQAGQWQQVQLESWKHHNQDMIIKLKGVDDRDAANLLTNCEIVVDSSQLPDLEEGDYYWKDLIGCQVVTTEGYSLGKVIDMMETGSNDVLVVKANLKDAFGIKERLLPFLDGQVIKKVDLATQTIEVDWDPGF</sequence>
<accession>A7MEG3</accession>
<gene>
    <name evidence="1" type="primary">rimM</name>
    <name type="ordered locus">ESA_00647</name>
</gene>
<dbReference type="EMBL" id="CP000783">
    <property type="protein sequence ID" value="ABU75930.1"/>
    <property type="molecule type" value="Genomic_DNA"/>
</dbReference>
<dbReference type="SMR" id="A7MEG3"/>
<dbReference type="KEGG" id="esa:ESA_00647"/>
<dbReference type="HOGENOM" id="CLU_077636_1_0_6"/>
<dbReference type="Proteomes" id="UP000000260">
    <property type="component" value="Chromosome"/>
</dbReference>
<dbReference type="GO" id="GO:0005737">
    <property type="term" value="C:cytoplasm"/>
    <property type="evidence" value="ECO:0007669"/>
    <property type="project" value="UniProtKB-SubCell"/>
</dbReference>
<dbReference type="GO" id="GO:0005840">
    <property type="term" value="C:ribosome"/>
    <property type="evidence" value="ECO:0007669"/>
    <property type="project" value="InterPro"/>
</dbReference>
<dbReference type="GO" id="GO:0043022">
    <property type="term" value="F:ribosome binding"/>
    <property type="evidence" value="ECO:0007669"/>
    <property type="project" value="InterPro"/>
</dbReference>
<dbReference type="GO" id="GO:0042274">
    <property type="term" value="P:ribosomal small subunit biogenesis"/>
    <property type="evidence" value="ECO:0007669"/>
    <property type="project" value="UniProtKB-UniRule"/>
</dbReference>
<dbReference type="GO" id="GO:0006364">
    <property type="term" value="P:rRNA processing"/>
    <property type="evidence" value="ECO:0007669"/>
    <property type="project" value="UniProtKB-UniRule"/>
</dbReference>
<dbReference type="FunFam" id="2.30.30.240:FF:000001">
    <property type="entry name" value="Ribosome maturation factor RimM"/>
    <property type="match status" value="1"/>
</dbReference>
<dbReference type="FunFam" id="2.40.30.60:FF:000001">
    <property type="entry name" value="Ribosome maturation factor RimM"/>
    <property type="match status" value="1"/>
</dbReference>
<dbReference type="Gene3D" id="2.30.30.240">
    <property type="entry name" value="PRC-barrel domain"/>
    <property type="match status" value="1"/>
</dbReference>
<dbReference type="Gene3D" id="2.40.30.60">
    <property type="entry name" value="RimM"/>
    <property type="match status" value="1"/>
</dbReference>
<dbReference type="HAMAP" id="MF_00014">
    <property type="entry name" value="Ribosome_mat_RimM"/>
    <property type="match status" value="1"/>
</dbReference>
<dbReference type="InterPro" id="IPR011033">
    <property type="entry name" value="PRC_barrel-like_sf"/>
</dbReference>
<dbReference type="InterPro" id="IPR056792">
    <property type="entry name" value="PRC_RimM"/>
</dbReference>
<dbReference type="InterPro" id="IPR011961">
    <property type="entry name" value="RimM"/>
</dbReference>
<dbReference type="InterPro" id="IPR002676">
    <property type="entry name" value="RimM_N"/>
</dbReference>
<dbReference type="InterPro" id="IPR036976">
    <property type="entry name" value="RimM_N_sf"/>
</dbReference>
<dbReference type="InterPro" id="IPR009000">
    <property type="entry name" value="Transl_B-barrel_sf"/>
</dbReference>
<dbReference type="NCBIfam" id="TIGR02273">
    <property type="entry name" value="16S_RimM"/>
    <property type="match status" value="1"/>
</dbReference>
<dbReference type="PANTHER" id="PTHR33692">
    <property type="entry name" value="RIBOSOME MATURATION FACTOR RIMM"/>
    <property type="match status" value="1"/>
</dbReference>
<dbReference type="PANTHER" id="PTHR33692:SF1">
    <property type="entry name" value="RIBOSOME MATURATION FACTOR RIMM"/>
    <property type="match status" value="1"/>
</dbReference>
<dbReference type="Pfam" id="PF24986">
    <property type="entry name" value="PRC_RimM"/>
    <property type="match status" value="1"/>
</dbReference>
<dbReference type="Pfam" id="PF01782">
    <property type="entry name" value="RimM"/>
    <property type="match status" value="1"/>
</dbReference>
<dbReference type="SUPFAM" id="SSF50346">
    <property type="entry name" value="PRC-barrel domain"/>
    <property type="match status" value="1"/>
</dbReference>
<dbReference type="SUPFAM" id="SSF50447">
    <property type="entry name" value="Translation proteins"/>
    <property type="match status" value="1"/>
</dbReference>
<protein>
    <recommendedName>
        <fullName evidence="1">Ribosome maturation factor RimM</fullName>
    </recommendedName>
</protein>
<comment type="function">
    <text evidence="1">An accessory protein needed during the final step in the assembly of 30S ribosomal subunit, possibly for assembly of the head region. Essential for efficient processing of 16S rRNA. May be needed both before and after RbfA during the maturation of 16S rRNA. It has affinity for free ribosomal 30S subunits but not for 70S ribosomes.</text>
</comment>
<comment type="subunit">
    <text evidence="1">Binds ribosomal protein uS19.</text>
</comment>
<comment type="subcellular location">
    <subcellularLocation>
        <location evidence="1">Cytoplasm</location>
    </subcellularLocation>
</comment>
<comment type="domain">
    <text evidence="1">The PRC barrel domain binds ribosomal protein uS19.</text>
</comment>
<comment type="similarity">
    <text evidence="1">Belongs to the RimM family.</text>
</comment>
<reference key="1">
    <citation type="journal article" date="2010" name="PLoS ONE">
        <title>Genome sequence of Cronobacter sakazakii BAA-894 and comparative genomic hybridization analysis with other Cronobacter species.</title>
        <authorList>
            <person name="Kucerova E."/>
            <person name="Clifton S.W."/>
            <person name="Xia X.Q."/>
            <person name="Long F."/>
            <person name="Porwollik S."/>
            <person name="Fulton L."/>
            <person name="Fronick C."/>
            <person name="Minx P."/>
            <person name="Kyung K."/>
            <person name="Warren W."/>
            <person name="Fulton R."/>
            <person name="Feng D."/>
            <person name="Wollam A."/>
            <person name="Shah N."/>
            <person name="Bhonagiri V."/>
            <person name="Nash W.E."/>
            <person name="Hallsworth-Pepin K."/>
            <person name="Wilson R.K."/>
            <person name="McClelland M."/>
            <person name="Forsythe S.J."/>
        </authorList>
    </citation>
    <scope>NUCLEOTIDE SEQUENCE [LARGE SCALE GENOMIC DNA]</scope>
    <source>
        <strain>ATCC BAA-894</strain>
    </source>
</reference>